<name>RL36_CHRSD</name>
<dbReference type="EMBL" id="CP000285">
    <property type="protein sequence ID" value="ABE57804.1"/>
    <property type="status" value="ALT_INIT"/>
    <property type="molecule type" value="Genomic_DNA"/>
</dbReference>
<dbReference type="RefSeq" id="WP_072824384.1">
    <property type="nucleotide sequence ID" value="NC_007963.1"/>
</dbReference>
<dbReference type="SMR" id="Q1R0F4"/>
<dbReference type="STRING" id="290398.Csal_0442"/>
<dbReference type="GeneID" id="95336057"/>
<dbReference type="KEGG" id="csa:Csal_0442"/>
<dbReference type="eggNOG" id="COG0257">
    <property type="taxonomic scope" value="Bacteria"/>
</dbReference>
<dbReference type="HOGENOM" id="CLU_135723_6_2_6"/>
<dbReference type="OrthoDB" id="9802520at2"/>
<dbReference type="Proteomes" id="UP000000239">
    <property type="component" value="Chromosome"/>
</dbReference>
<dbReference type="GO" id="GO:0005737">
    <property type="term" value="C:cytoplasm"/>
    <property type="evidence" value="ECO:0007669"/>
    <property type="project" value="UniProtKB-ARBA"/>
</dbReference>
<dbReference type="GO" id="GO:1990904">
    <property type="term" value="C:ribonucleoprotein complex"/>
    <property type="evidence" value="ECO:0007669"/>
    <property type="project" value="UniProtKB-KW"/>
</dbReference>
<dbReference type="GO" id="GO:0005840">
    <property type="term" value="C:ribosome"/>
    <property type="evidence" value="ECO:0007669"/>
    <property type="project" value="UniProtKB-KW"/>
</dbReference>
<dbReference type="GO" id="GO:0003735">
    <property type="term" value="F:structural constituent of ribosome"/>
    <property type="evidence" value="ECO:0007669"/>
    <property type="project" value="InterPro"/>
</dbReference>
<dbReference type="GO" id="GO:0006412">
    <property type="term" value="P:translation"/>
    <property type="evidence" value="ECO:0007669"/>
    <property type="project" value="UniProtKB-UniRule"/>
</dbReference>
<dbReference type="HAMAP" id="MF_00251">
    <property type="entry name" value="Ribosomal_bL36"/>
    <property type="match status" value="1"/>
</dbReference>
<dbReference type="InterPro" id="IPR000473">
    <property type="entry name" value="Ribosomal_bL36"/>
</dbReference>
<dbReference type="InterPro" id="IPR035977">
    <property type="entry name" value="Ribosomal_bL36_sp"/>
</dbReference>
<dbReference type="NCBIfam" id="TIGR01022">
    <property type="entry name" value="rpmJ_bact"/>
    <property type="match status" value="1"/>
</dbReference>
<dbReference type="PANTHER" id="PTHR42888">
    <property type="entry name" value="50S RIBOSOMAL PROTEIN L36, CHLOROPLASTIC"/>
    <property type="match status" value="1"/>
</dbReference>
<dbReference type="PANTHER" id="PTHR42888:SF1">
    <property type="entry name" value="LARGE RIBOSOMAL SUBUNIT PROTEIN BL36C"/>
    <property type="match status" value="1"/>
</dbReference>
<dbReference type="Pfam" id="PF00444">
    <property type="entry name" value="Ribosomal_L36"/>
    <property type="match status" value="1"/>
</dbReference>
<dbReference type="SUPFAM" id="SSF57840">
    <property type="entry name" value="Ribosomal protein L36"/>
    <property type="match status" value="1"/>
</dbReference>
<dbReference type="PROSITE" id="PS00828">
    <property type="entry name" value="RIBOSOMAL_L36"/>
    <property type="match status" value="1"/>
</dbReference>
<keyword id="KW-1185">Reference proteome</keyword>
<keyword id="KW-0687">Ribonucleoprotein</keyword>
<keyword id="KW-0689">Ribosomal protein</keyword>
<comment type="similarity">
    <text evidence="1">Belongs to the bacterial ribosomal protein bL36 family.</text>
</comment>
<comment type="sequence caution" evidence="2">
    <conflict type="erroneous initiation">
        <sequence resource="EMBL-CDS" id="ABE57804"/>
    </conflict>
</comment>
<organism>
    <name type="scientific">Chromohalobacter salexigens (strain ATCC BAA-138 / DSM 3043 / CIP 106854 / NCIMB 13768 / 1H11)</name>
    <dbReference type="NCBI Taxonomy" id="290398"/>
    <lineage>
        <taxon>Bacteria</taxon>
        <taxon>Pseudomonadati</taxon>
        <taxon>Pseudomonadota</taxon>
        <taxon>Gammaproteobacteria</taxon>
        <taxon>Oceanospirillales</taxon>
        <taxon>Halomonadaceae</taxon>
        <taxon>Chromohalobacter</taxon>
    </lineage>
</organism>
<reference key="1">
    <citation type="journal article" date="2011" name="Stand. Genomic Sci.">
        <title>Complete genome sequence of the halophilic and highly halotolerant Chromohalobacter salexigens type strain (1H11(T)).</title>
        <authorList>
            <person name="Copeland A."/>
            <person name="O'Connor K."/>
            <person name="Lucas S."/>
            <person name="Lapidus A."/>
            <person name="Berry K.W."/>
            <person name="Detter J.C."/>
            <person name="Del Rio T.G."/>
            <person name="Hammon N."/>
            <person name="Dalin E."/>
            <person name="Tice H."/>
            <person name="Pitluck S."/>
            <person name="Bruce D."/>
            <person name="Goodwin L."/>
            <person name="Han C."/>
            <person name="Tapia R."/>
            <person name="Saunders E."/>
            <person name="Schmutz J."/>
            <person name="Brettin T."/>
            <person name="Larimer F."/>
            <person name="Land M."/>
            <person name="Hauser L."/>
            <person name="Vargas C."/>
            <person name="Nieto J.J."/>
            <person name="Kyrpides N.C."/>
            <person name="Ivanova N."/>
            <person name="Goker M."/>
            <person name="Klenk H.P."/>
            <person name="Csonka L.N."/>
            <person name="Woyke T."/>
        </authorList>
    </citation>
    <scope>NUCLEOTIDE SEQUENCE [LARGE SCALE GENOMIC DNA]</scope>
    <source>
        <strain>ATCC BAA-138 / DSM 3043 / CIP 106854 / NCIMB 13768 / 1H11</strain>
    </source>
</reference>
<proteinExistence type="inferred from homology"/>
<accession>Q1R0F4</accession>
<gene>
    <name evidence="1" type="primary">rpmJ</name>
    <name type="ordered locus">Csal_0442</name>
</gene>
<protein>
    <recommendedName>
        <fullName evidence="1">Large ribosomal subunit protein bL36</fullName>
    </recommendedName>
    <alternativeName>
        <fullName evidence="2">50S ribosomal protein L36</fullName>
    </alternativeName>
</protein>
<sequence length="37" mass="4366">MKVRASVKKMCRNCKIIRRNGAIRVICTEPRHKQRQG</sequence>
<feature type="chain" id="PRO_0000344656" description="Large ribosomal subunit protein bL36">
    <location>
        <begin position="1"/>
        <end position="37"/>
    </location>
</feature>
<evidence type="ECO:0000255" key="1">
    <source>
        <dbReference type="HAMAP-Rule" id="MF_00251"/>
    </source>
</evidence>
<evidence type="ECO:0000305" key="2"/>